<protein>
    <recommendedName>
        <fullName evidence="2">Ornithine carbamoyltransferase</fullName>
        <shortName evidence="2">OTCase</shortName>
        <ecNumber evidence="2">2.1.3.3</ecNumber>
    </recommendedName>
</protein>
<reference key="1">
    <citation type="submission" date="2008-10" db="EMBL/GenBank/DDBJ databases">
        <title>Genome sequence of Bacillus cereus AH187.</title>
        <authorList>
            <person name="Dodson R.J."/>
            <person name="Durkin A.S."/>
            <person name="Rosovitz M.J."/>
            <person name="Rasko D.A."/>
            <person name="Kolsto A.B."/>
            <person name="Okstad O.A."/>
            <person name="Ravel J."/>
            <person name="Sutton G."/>
        </authorList>
    </citation>
    <scope>NUCLEOTIDE SEQUENCE [LARGE SCALE GENOMIC DNA]</scope>
    <source>
        <strain>AH187</strain>
    </source>
</reference>
<feature type="chain" id="PRO_1000163960" description="Ornithine carbamoyltransferase">
    <location>
        <begin position="1"/>
        <end position="316"/>
    </location>
</feature>
<feature type="binding site" evidence="2">
    <location>
        <begin position="57"/>
        <end position="60"/>
    </location>
    <ligand>
        <name>carbamoyl phosphate</name>
        <dbReference type="ChEBI" id="CHEBI:58228"/>
    </ligand>
</feature>
<feature type="binding site" evidence="2">
    <location>
        <position position="84"/>
    </location>
    <ligand>
        <name>carbamoyl phosphate</name>
        <dbReference type="ChEBI" id="CHEBI:58228"/>
    </ligand>
</feature>
<feature type="binding site" evidence="2">
    <location>
        <position position="108"/>
    </location>
    <ligand>
        <name>carbamoyl phosphate</name>
        <dbReference type="ChEBI" id="CHEBI:58228"/>
    </ligand>
</feature>
<feature type="binding site" evidence="2">
    <location>
        <begin position="135"/>
        <end position="138"/>
    </location>
    <ligand>
        <name>carbamoyl phosphate</name>
        <dbReference type="ChEBI" id="CHEBI:58228"/>
    </ligand>
</feature>
<feature type="binding site" evidence="2">
    <location>
        <position position="166"/>
    </location>
    <ligand>
        <name>L-ornithine</name>
        <dbReference type="ChEBI" id="CHEBI:46911"/>
    </ligand>
</feature>
<feature type="binding site" evidence="2">
    <location>
        <position position="230"/>
    </location>
    <ligand>
        <name>L-ornithine</name>
        <dbReference type="ChEBI" id="CHEBI:46911"/>
    </ligand>
</feature>
<feature type="binding site" evidence="2">
    <location>
        <begin position="234"/>
        <end position="235"/>
    </location>
    <ligand>
        <name>L-ornithine</name>
        <dbReference type="ChEBI" id="CHEBI:46911"/>
    </ligand>
</feature>
<feature type="binding site" evidence="2">
    <location>
        <begin position="269"/>
        <end position="270"/>
    </location>
    <ligand>
        <name>carbamoyl phosphate</name>
        <dbReference type="ChEBI" id="CHEBI:58228"/>
    </ligand>
</feature>
<feature type="binding site" evidence="2">
    <location>
        <position position="297"/>
    </location>
    <ligand>
        <name>carbamoyl phosphate</name>
        <dbReference type="ChEBI" id="CHEBI:58228"/>
    </ligand>
</feature>
<name>OTC_BACC7</name>
<dbReference type="EC" id="2.1.3.3" evidence="2"/>
<dbReference type="EMBL" id="CP001177">
    <property type="protein sequence ID" value="ACJ80667.1"/>
    <property type="molecule type" value="Genomic_DNA"/>
</dbReference>
<dbReference type="SMR" id="B7HNP5"/>
<dbReference type="KEGG" id="bcr:BCAH187_A4262"/>
<dbReference type="HOGENOM" id="CLU_043846_3_2_9"/>
<dbReference type="UniPathway" id="UPA00254">
    <property type="reaction ID" value="UER00365"/>
</dbReference>
<dbReference type="Proteomes" id="UP000002214">
    <property type="component" value="Chromosome"/>
</dbReference>
<dbReference type="GO" id="GO:0005737">
    <property type="term" value="C:cytoplasm"/>
    <property type="evidence" value="ECO:0007669"/>
    <property type="project" value="UniProtKB-SubCell"/>
</dbReference>
<dbReference type="GO" id="GO:0016597">
    <property type="term" value="F:amino acid binding"/>
    <property type="evidence" value="ECO:0007669"/>
    <property type="project" value="InterPro"/>
</dbReference>
<dbReference type="GO" id="GO:0004585">
    <property type="term" value="F:ornithine carbamoyltransferase activity"/>
    <property type="evidence" value="ECO:0007669"/>
    <property type="project" value="UniProtKB-UniRule"/>
</dbReference>
<dbReference type="GO" id="GO:0042450">
    <property type="term" value="P:arginine biosynthetic process via ornithine"/>
    <property type="evidence" value="ECO:0007669"/>
    <property type="project" value="TreeGrafter"/>
</dbReference>
<dbReference type="GO" id="GO:0019547">
    <property type="term" value="P:arginine catabolic process to ornithine"/>
    <property type="evidence" value="ECO:0007669"/>
    <property type="project" value="UniProtKB-UniRule"/>
</dbReference>
<dbReference type="GO" id="GO:0019240">
    <property type="term" value="P:citrulline biosynthetic process"/>
    <property type="evidence" value="ECO:0007669"/>
    <property type="project" value="TreeGrafter"/>
</dbReference>
<dbReference type="FunFam" id="3.40.50.1370:FF:000008">
    <property type="entry name" value="Ornithine carbamoyltransferase"/>
    <property type="match status" value="1"/>
</dbReference>
<dbReference type="FunFam" id="3.40.50.1370:FF:000016">
    <property type="entry name" value="Ornithine carbamoyltransferase"/>
    <property type="match status" value="1"/>
</dbReference>
<dbReference type="Gene3D" id="3.40.50.1370">
    <property type="entry name" value="Aspartate/ornithine carbamoyltransferase"/>
    <property type="match status" value="2"/>
</dbReference>
<dbReference type="HAMAP" id="MF_01109">
    <property type="entry name" value="OTCase"/>
    <property type="match status" value="1"/>
</dbReference>
<dbReference type="InterPro" id="IPR006132">
    <property type="entry name" value="Asp/Orn_carbamoyltranf_P-bd"/>
</dbReference>
<dbReference type="InterPro" id="IPR006130">
    <property type="entry name" value="Asp/Orn_carbamoylTrfase"/>
</dbReference>
<dbReference type="InterPro" id="IPR036901">
    <property type="entry name" value="Asp/Orn_carbamoylTrfase_sf"/>
</dbReference>
<dbReference type="InterPro" id="IPR006131">
    <property type="entry name" value="Asp_carbamoyltransf_Asp/Orn-bd"/>
</dbReference>
<dbReference type="InterPro" id="IPR002292">
    <property type="entry name" value="Orn/put_carbamltrans"/>
</dbReference>
<dbReference type="InterPro" id="IPR024904">
    <property type="entry name" value="OTCase_ArgI"/>
</dbReference>
<dbReference type="NCBIfam" id="TIGR00658">
    <property type="entry name" value="orni_carb_tr"/>
    <property type="match status" value="1"/>
</dbReference>
<dbReference type="NCBIfam" id="NF001986">
    <property type="entry name" value="PRK00779.1"/>
    <property type="match status" value="1"/>
</dbReference>
<dbReference type="PANTHER" id="PTHR45753">
    <property type="entry name" value="ORNITHINE CARBAMOYLTRANSFERASE, MITOCHONDRIAL"/>
    <property type="match status" value="1"/>
</dbReference>
<dbReference type="PANTHER" id="PTHR45753:SF3">
    <property type="entry name" value="ORNITHINE TRANSCARBAMYLASE, MITOCHONDRIAL"/>
    <property type="match status" value="1"/>
</dbReference>
<dbReference type="Pfam" id="PF00185">
    <property type="entry name" value="OTCace"/>
    <property type="match status" value="1"/>
</dbReference>
<dbReference type="Pfam" id="PF02729">
    <property type="entry name" value="OTCace_N"/>
    <property type="match status" value="1"/>
</dbReference>
<dbReference type="PRINTS" id="PR00100">
    <property type="entry name" value="AOTCASE"/>
</dbReference>
<dbReference type="PRINTS" id="PR00102">
    <property type="entry name" value="OTCASE"/>
</dbReference>
<dbReference type="SUPFAM" id="SSF53671">
    <property type="entry name" value="Aspartate/ornithine carbamoyltransferase"/>
    <property type="match status" value="1"/>
</dbReference>
<dbReference type="PROSITE" id="PS00097">
    <property type="entry name" value="CARBAMOYLTRANSFERASE"/>
    <property type="match status" value="1"/>
</dbReference>
<accession>B7HNP5</accession>
<gene>
    <name evidence="2" type="primary">arcB</name>
    <name type="ordered locus">BCAH187_A4262</name>
</gene>
<organism>
    <name type="scientific">Bacillus cereus (strain AH187)</name>
    <dbReference type="NCBI Taxonomy" id="405534"/>
    <lineage>
        <taxon>Bacteria</taxon>
        <taxon>Bacillati</taxon>
        <taxon>Bacillota</taxon>
        <taxon>Bacilli</taxon>
        <taxon>Bacillales</taxon>
        <taxon>Bacillaceae</taxon>
        <taxon>Bacillus</taxon>
        <taxon>Bacillus cereus group</taxon>
    </lineage>
</organism>
<proteinExistence type="inferred from homology"/>
<comment type="function">
    <text evidence="1">Reversibly catalyzes the transfer of the carbamoyl group from carbamoyl phosphate (CP) to the N(epsilon) atom of ornithine (ORN) to produce L-citrulline.</text>
</comment>
<comment type="catalytic activity">
    <reaction evidence="2">
        <text>carbamoyl phosphate + L-ornithine = L-citrulline + phosphate + H(+)</text>
        <dbReference type="Rhea" id="RHEA:19513"/>
        <dbReference type="ChEBI" id="CHEBI:15378"/>
        <dbReference type="ChEBI" id="CHEBI:43474"/>
        <dbReference type="ChEBI" id="CHEBI:46911"/>
        <dbReference type="ChEBI" id="CHEBI:57743"/>
        <dbReference type="ChEBI" id="CHEBI:58228"/>
        <dbReference type="EC" id="2.1.3.3"/>
    </reaction>
</comment>
<comment type="pathway">
    <text evidence="2">Amino-acid degradation; L-arginine degradation via ADI pathway; carbamoyl phosphate from L-arginine: step 2/2.</text>
</comment>
<comment type="subcellular location">
    <subcellularLocation>
        <location evidence="2">Cytoplasm</location>
    </subcellularLocation>
</comment>
<comment type="similarity">
    <text evidence="2">Belongs to the aspartate/ornithine carbamoyltransferase superfamily. OTCase family.</text>
</comment>
<keyword id="KW-0056">Arginine metabolism</keyword>
<keyword id="KW-0963">Cytoplasm</keyword>
<keyword id="KW-0808">Transferase</keyword>
<sequence length="316" mass="35289">MSTVQVPKLNTKDLLTLEELTKEEIISLIEFAIYLKKNKQEPLLQGKILGLIFDKHSTRTRVSFEAGMVQLGGHGMFLSGKEMQMGRGETVSDTAKVLSQYIDGIMIRTFSHADVEELAKESSIPVINGLTDDHHPCQALADLMTIYEETNTFKGIKLAYVGDGNNVCHSLLLASAKVGMHMTVATPIGYEPNEEIVKKALAIAKETGAEIEILHNPELAVNEADFIYTDVWMSMGQEGEEEKYTLFQPYQINNELVKHAKQTYRFLHCLPAHREEEVTGEIIDGPKSIVFEQAGNRLHAQKALLVSLFKNVEELS</sequence>
<evidence type="ECO:0000250" key="1"/>
<evidence type="ECO:0000255" key="2">
    <source>
        <dbReference type="HAMAP-Rule" id="MF_01109"/>
    </source>
</evidence>